<accession>B0U054</accession>
<proteinExistence type="inferred from homology"/>
<feature type="chain" id="PRO_0000374837" description="Ribosomal protein uS12 methylthiotransferase RimO">
    <location>
        <begin position="1"/>
        <end position="439"/>
    </location>
</feature>
<feature type="domain" description="MTTase N-terminal" evidence="1">
    <location>
        <begin position="5"/>
        <end position="115"/>
    </location>
</feature>
<feature type="domain" description="Radical SAM core" evidence="2">
    <location>
        <begin position="132"/>
        <end position="369"/>
    </location>
</feature>
<feature type="domain" description="TRAM" evidence="1">
    <location>
        <begin position="372"/>
        <end position="439"/>
    </location>
</feature>
<feature type="binding site" evidence="1">
    <location>
        <position position="14"/>
    </location>
    <ligand>
        <name>[4Fe-4S] cluster</name>
        <dbReference type="ChEBI" id="CHEBI:49883"/>
        <label>1</label>
    </ligand>
</feature>
<feature type="binding site" evidence="1">
    <location>
        <position position="50"/>
    </location>
    <ligand>
        <name>[4Fe-4S] cluster</name>
        <dbReference type="ChEBI" id="CHEBI:49883"/>
        <label>1</label>
    </ligand>
</feature>
<feature type="binding site" evidence="1">
    <location>
        <position position="79"/>
    </location>
    <ligand>
        <name>[4Fe-4S] cluster</name>
        <dbReference type="ChEBI" id="CHEBI:49883"/>
        <label>1</label>
    </ligand>
</feature>
<feature type="binding site" evidence="1">
    <location>
        <position position="146"/>
    </location>
    <ligand>
        <name>[4Fe-4S] cluster</name>
        <dbReference type="ChEBI" id="CHEBI:49883"/>
        <label>2</label>
        <note>4Fe-4S-S-AdoMet</note>
    </ligand>
</feature>
<feature type="binding site" evidence="1">
    <location>
        <position position="150"/>
    </location>
    <ligand>
        <name>[4Fe-4S] cluster</name>
        <dbReference type="ChEBI" id="CHEBI:49883"/>
        <label>2</label>
        <note>4Fe-4S-S-AdoMet</note>
    </ligand>
</feature>
<feature type="binding site" evidence="1">
    <location>
        <position position="153"/>
    </location>
    <ligand>
        <name>[4Fe-4S] cluster</name>
        <dbReference type="ChEBI" id="CHEBI:49883"/>
        <label>2</label>
        <note>4Fe-4S-S-AdoMet</note>
    </ligand>
</feature>
<comment type="function">
    <text evidence="1">Catalyzes the methylthiolation of an aspartic acid residue of ribosomal protein uS12.</text>
</comment>
<comment type="catalytic activity">
    <reaction evidence="1">
        <text>L-aspartate(89)-[ribosomal protein uS12]-hydrogen + (sulfur carrier)-SH + AH2 + 2 S-adenosyl-L-methionine = 3-methylsulfanyl-L-aspartate(89)-[ribosomal protein uS12]-hydrogen + (sulfur carrier)-H + 5'-deoxyadenosine + L-methionine + A + S-adenosyl-L-homocysteine + 2 H(+)</text>
        <dbReference type="Rhea" id="RHEA:37087"/>
        <dbReference type="Rhea" id="RHEA-COMP:10460"/>
        <dbReference type="Rhea" id="RHEA-COMP:10461"/>
        <dbReference type="Rhea" id="RHEA-COMP:14737"/>
        <dbReference type="Rhea" id="RHEA-COMP:14739"/>
        <dbReference type="ChEBI" id="CHEBI:13193"/>
        <dbReference type="ChEBI" id="CHEBI:15378"/>
        <dbReference type="ChEBI" id="CHEBI:17319"/>
        <dbReference type="ChEBI" id="CHEBI:17499"/>
        <dbReference type="ChEBI" id="CHEBI:29917"/>
        <dbReference type="ChEBI" id="CHEBI:29961"/>
        <dbReference type="ChEBI" id="CHEBI:57844"/>
        <dbReference type="ChEBI" id="CHEBI:57856"/>
        <dbReference type="ChEBI" id="CHEBI:59789"/>
        <dbReference type="ChEBI" id="CHEBI:64428"/>
        <dbReference type="ChEBI" id="CHEBI:73599"/>
        <dbReference type="EC" id="2.8.4.4"/>
    </reaction>
</comment>
<comment type="cofactor">
    <cofactor evidence="1">
        <name>[4Fe-4S] cluster</name>
        <dbReference type="ChEBI" id="CHEBI:49883"/>
    </cofactor>
    <text evidence="1">Binds 2 [4Fe-4S] clusters. One cluster is coordinated with 3 cysteines and an exchangeable S-adenosyl-L-methionine.</text>
</comment>
<comment type="subcellular location">
    <subcellularLocation>
        <location evidence="1">Cytoplasm</location>
    </subcellularLocation>
</comment>
<comment type="similarity">
    <text evidence="1">Belongs to the methylthiotransferase family. RimO subfamily.</text>
</comment>
<evidence type="ECO:0000255" key="1">
    <source>
        <dbReference type="HAMAP-Rule" id="MF_01865"/>
    </source>
</evidence>
<evidence type="ECO:0000255" key="2">
    <source>
        <dbReference type="PROSITE-ProRule" id="PRU01266"/>
    </source>
</evidence>
<protein>
    <recommendedName>
        <fullName evidence="1">Ribosomal protein uS12 methylthiotransferase RimO</fullName>
        <shortName evidence="1">uS12 MTTase</shortName>
        <shortName evidence="1">uS12 methylthiotransferase</shortName>
        <ecNumber evidence="1">2.8.4.4</ecNumber>
    </recommendedName>
    <alternativeName>
        <fullName evidence="1">Ribosomal protein uS12 (aspartate-C(3))-methylthiotransferase</fullName>
    </alternativeName>
    <alternativeName>
        <fullName evidence="1">Ribosome maturation factor RimO</fullName>
    </alternativeName>
</protein>
<reference key="1">
    <citation type="submission" date="2007-12" db="EMBL/GenBank/DDBJ databases">
        <title>Complete sequence of chromosome of Francisella philomiragia subsp. philomiragia ATCC 25017.</title>
        <authorList>
            <consortium name="US DOE Joint Genome Institute"/>
            <person name="Copeland A."/>
            <person name="Lucas S."/>
            <person name="Lapidus A."/>
            <person name="Barry K."/>
            <person name="Detter J.C."/>
            <person name="Glavina del Rio T."/>
            <person name="Hammon N."/>
            <person name="Israni S."/>
            <person name="Dalin E."/>
            <person name="Tice H."/>
            <person name="Pitluck S."/>
            <person name="Chain P."/>
            <person name="Malfatti S."/>
            <person name="Shin M."/>
            <person name="Vergez L."/>
            <person name="Schmutz J."/>
            <person name="Larimer F."/>
            <person name="Land M."/>
            <person name="Hauser L."/>
            <person name="Richardson P."/>
        </authorList>
    </citation>
    <scope>NUCLEOTIDE SEQUENCE [LARGE SCALE GENOMIC DNA]</scope>
    <source>
        <strain>ATCC 25017 / CCUG 19701 / FSC 153 / O#319-036</strain>
    </source>
</reference>
<keyword id="KW-0004">4Fe-4S</keyword>
<keyword id="KW-0963">Cytoplasm</keyword>
<keyword id="KW-0408">Iron</keyword>
<keyword id="KW-0411">Iron-sulfur</keyword>
<keyword id="KW-0479">Metal-binding</keyword>
<keyword id="KW-0949">S-adenosyl-L-methionine</keyword>
<keyword id="KW-0808">Transferase</keyword>
<dbReference type="EC" id="2.8.4.4" evidence="1"/>
<dbReference type="EMBL" id="CP000937">
    <property type="protein sequence ID" value="ABZ86683.1"/>
    <property type="molecule type" value="Genomic_DNA"/>
</dbReference>
<dbReference type="SMR" id="B0U054"/>
<dbReference type="KEGG" id="fph:Fphi_0465"/>
<dbReference type="eggNOG" id="COG0621">
    <property type="taxonomic scope" value="Bacteria"/>
</dbReference>
<dbReference type="HOGENOM" id="CLU_018697_0_0_6"/>
<dbReference type="GO" id="GO:0005829">
    <property type="term" value="C:cytosol"/>
    <property type="evidence" value="ECO:0007669"/>
    <property type="project" value="TreeGrafter"/>
</dbReference>
<dbReference type="GO" id="GO:0051539">
    <property type="term" value="F:4 iron, 4 sulfur cluster binding"/>
    <property type="evidence" value="ECO:0007669"/>
    <property type="project" value="UniProtKB-UniRule"/>
</dbReference>
<dbReference type="GO" id="GO:0035599">
    <property type="term" value="F:aspartic acid methylthiotransferase activity"/>
    <property type="evidence" value="ECO:0007669"/>
    <property type="project" value="TreeGrafter"/>
</dbReference>
<dbReference type="GO" id="GO:0046872">
    <property type="term" value="F:metal ion binding"/>
    <property type="evidence" value="ECO:0007669"/>
    <property type="project" value="UniProtKB-KW"/>
</dbReference>
<dbReference type="GO" id="GO:0103039">
    <property type="term" value="F:protein methylthiotransferase activity"/>
    <property type="evidence" value="ECO:0007669"/>
    <property type="project" value="UniProtKB-EC"/>
</dbReference>
<dbReference type="GO" id="GO:0006400">
    <property type="term" value="P:tRNA modification"/>
    <property type="evidence" value="ECO:0007669"/>
    <property type="project" value="InterPro"/>
</dbReference>
<dbReference type="CDD" id="cd01335">
    <property type="entry name" value="Radical_SAM"/>
    <property type="match status" value="1"/>
</dbReference>
<dbReference type="FunFam" id="3.40.50.12160:FF:000002">
    <property type="entry name" value="Ribosomal protein S12 methylthiotransferase RimO"/>
    <property type="match status" value="1"/>
</dbReference>
<dbReference type="FunFam" id="3.80.30.20:FF:000001">
    <property type="entry name" value="tRNA-2-methylthio-N(6)-dimethylallyladenosine synthase 2"/>
    <property type="match status" value="1"/>
</dbReference>
<dbReference type="Gene3D" id="3.40.50.12160">
    <property type="entry name" value="Methylthiotransferase, N-terminal domain"/>
    <property type="match status" value="1"/>
</dbReference>
<dbReference type="Gene3D" id="2.40.50.140">
    <property type="entry name" value="Nucleic acid-binding proteins"/>
    <property type="match status" value="1"/>
</dbReference>
<dbReference type="Gene3D" id="3.80.30.20">
    <property type="entry name" value="tm_1862 like domain"/>
    <property type="match status" value="1"/>
</dbReference>
<dbReference type="HAMAP" id="MF_01865">
    <property type="entry name" value="MTTase_RimO"/>
    <property type="match status" value="1"/>
</dbReference>
<dbReference type="InterPro" id="IPR006638">
    <property type="entry name" value="Elp3/MiaA/NifB-like_rSAM"/>
</dbReference>
<dbReference type="InterPro" id="IPR005839">
    <property type="entry name" value="Methylthiotransferase"/>
</dbReference>
<dbReference type="InterPro" id="IPR020612">
    <property type="entry name" value="Methylthiotransferase_CS"/>
</dbReference>
<dbReference type="InterPro" id="IPR013848">
    <property type="entry name" value="Methylthiotransferase_N"/>
</dbReference>
<dbReference type="InterPro" id="IPR038135">
    <property type="entry name" value="Methylthiotransferase_N_sf"/>
</dbReference>
<dbReference type="InterPro" id="IPR012340">
    <property type="entry name" value="NA-bd_OB-fold"/>
</dbReference>
<dbReference type="InterPro" id="IPR005840">
    <property type="entry name" value="Ribosomal_uS12_MeSTrfase_RimO"/>
</dbReference>
<dbReference type="InterPro" id="IPR007197">
    <property type="entry name" value="rSAM"/>
</dbReference>
<dbReference type="InterPro" id="IPR023404">
    <property type="entry name" value="rSAM_horseshoe"/>
</dbReference>
<dbReference type="InterPro" id="IPR002792">
    <property type="entry name" value="TRAM_dom"/>
</dbReference>
<dbReference type="NCBIfam" id="TIGR01125">
    <property type="entry name" value="30S ribosomal protein S12 methylthiotransferase RimO"/>
    <property type="match status" value="1"/>
</dbReference>
<dbReference type="NCBIfam" id="TIGR00089">
    <property type="entry name" value="MiaB/RimO family radical SAM methylthiotransferase"/>
    <property type="match status" value="1"/>
</dbReference>
<dbReference type="PANTHER" id="PTHR43837">
    <property type="entry name" value="RIBOSOMAL PROTEIN S12 METHYLTHIOTRANSFERASE RIMO"/>
    <property type="match status" value="1"/>
</dbReference>
<dbReference type="PANTHER" id="PTHR43837:SF1">
    <property type="entry name" value="RIBOSOMAL PROTEIN US12 METHYLTHIOTRANSFERASE RIMO"/>
    <property type="match status" value="1"/>
</dbReference>
<dbReference type="Pfam" id="PF04055">
    <property type="entry name" value="Radical_SAM"/>
    <property type="match status" value="1"/>
</dbReference>
<dbReference type="Pfam" id="PF18693">
    <property type="entry name" value="TRAM_2"/>
    <property type="match status" value="1"/>
</dbReference>
<dbReference type="Pfam" id="PF00919">
    <property type="entry name" value="UPF0004"/>
    <property type="match status" value="1"/>
</dbReference>
<dbReference type="SFLD" id="SFLDG01082">
    <property type="entry name" value="B12-binding_domain_containing"/>
    <property type="match status" value="1"/>
</dbReference>
<dbReference type="SFLD" id="SFLDG01061">
    <property type="entry name" value="methylthiotransferase"/>
    <property type="match status" value="1"/>
</dbReference>
<dbReference type="SFLD" id="SFLDF00274">
    <property type="entry name" value="ribosomal_protein_S12_methylth"/>
    <property type="match status" value="1"/>
</dbReference>
<dbReference type="SMART" id="SM00729">
    <property type="entry name" value="Elp3"/>
    <property type="match status" value="1"/>
</dbReference>
<dbReference type="SUPFAM" id="SSF102114">
    <property type="entry name" value="Radical SAM enzymes"/>
    <property type="match status" value="1"/>
</dbReference>
<dbReference type="PROSITE" id="PS51449">
    <property type="entry name" value="MTTASE_N"/>
    <property type="match status" value="1"/>
</dbReference>
<dbReference type="PROSITE" id="PS01278">
    <property type="entry name" value="MTTASE_RADICAL"/>
    <property type="match status" value="1"/>
</dbReference>
<dbReference type="PROSITE" id="PS51918">
    <property type="entry name" value="RADICAL_SAM"/>
    <property type="match status" value="1"/>
</dbReference>
<dbReference type="PROSITE" id="PS50926">
    <property type="entry name" value="TRAM"/>
    <property type="match status" value="1"/>
</dbReference>
<name>RIMO_FRAP2</name>
<gene>
    <name evidence="1" type="primary">rimO</name>
    <name type="ordered locus">Fphi_0465</name>
</gene>
<organism>
    <name type="scientific">Francisella philomiragia subsp. philomiragia (strain ATCC 25017 / CCUG 19701 / FSC 153 / O#319-036)</name>
    <dbReference type="NCBI Taxonomy" id="484022"/>
    <lineage>
        <taxon>Bacteria</taxon>
        <taxon>Pseudomonadati</taxon>
        <taxon>Pseudomonadota</taxon>
        <taxon>Gammaproteobacteria</taxon>
        <taxon>Thiotrichales</taxon>
        <taxon>Francisellaceae</taxon>
        <taxon>Francisella</taxon>
    </lineage>
</organism>
<sequence length="439" mass="49234">MIKIPKIGFVSLGCPKNLVDSERIITKLKAEGYDLVDSYDNADMVIVNTCGFLNSAIDESLEVIGEAIAENGKVLVTGCLGNKADLIKEKHSEVLSITGPQDYENLIEAVHTHAPIFVNDFVSLVPPQGIKLTPRHYSYLKISEGCNNTCTFCIIPDIRGKLKSRSIDNIMKEAEKLKNAGVKELLVISQDTSAYGVDIKYKSGIWNDKEYQSNILDLATALGDLDMWTRLHYVYPYPHVDKIVPLMAQGKILPYLDVPLQHSSPEVLKRMKRPAHTQKTLDRINKWRDICPDITIRSTFIVGFPGETEADFEHLLDFAEKAQLDRVGCFKYSEVEGAKANQFDNLISEEVKQQRLDEFMGLQAQISADKLQRFVGTEQQVIIDVINKDENYAIGRTKYDAPEVDGQVIIGDALERNLKVGEFATVEITESTEYDLIAD</sequence>